<gene>
    <name evidence="1" type="primary">thrB</name>
    <name type="ordered locus">Tery_1018</name>
</gene>
<organism>
    <name type="scientific">Trichodesmium erythraeum (strain IMS101)</name>
    <dbReference type="NCBI Taxonomy" id="203124"/>
    <lineage>
        <taxon>Bacteria</taxon>
        <taxon>Bacillati</taxon>
        <taxon>Cyanobacteriota</taxon>
        <taxon>Cyanophyceae</taxon>
        <taxon>Oscillatoriophycideae</taxon>
        <taxon>Oscillatoriales</taxon>
        <taxon>Microcoleaceae</taxon>
        <taxon>Trichodesmium</taxon>
    </lineage>
</organism>
<sequence>MTTLSSITVSVPATTANLGPGFDCLGAAISLYNRFKFSIADSAIEVKITVTGKEAPKVSTDRNNLAYQAFVKLYEYINQTPPCVLVEIDLGVPLARGLGSSATAIVGGLLGANQLAGSPLSQTEVMNLAIAIEGHPDNVVPALLGGCRLTASTSKGWVVCDIPWHPDIVPVVAIPDFELSTTEARRVIPTEYIRSDAIFNCAHLGILLRGLETGYGEWLQAGMQDKIHQPYRKSLIKGYEYVRSAALNAGAYEMVISGAGPTLLALTNSLTSSKVIAAMTGAWENQGVVTQVQALEINTRGAVFS</sequence>
<protein>
    <recommendedName>
        <fullName evidence="1">Homoserine kinase</fullName>
        <shortName evidence="1">HK</shortName>
        <shortName evidence="1">HSK</shortName>
        <ecNumber evidence="1">2.7.1.39</ecNumber>
    </recommendedName>
</protein>
<evidence type="ECO:0000255" key="1">
    <source>
        <dbReference type="HAMAP-Rule" id="MF_00384"/>
    </source>
</evidence>
<dbReference type="EC" id="2.7.1.39" evidence="1"/>
<dbReference type="EMBL" id="CP000393">
    <property type="protein sequence ID" value="ABG50394.1"/>
    <property type="molecule type" value="Genomic_DNA"/>
</dbReference>
<dbReference type="RefSeq" id="WP_011610781.1">
    <property type="nucleotide sequence ID" value="NC_008312.1"/>
</dbReference>
<dbReference type="SMR" id="Q117D0"/>
<dbReference type="STRING" id="203124.Tery_1018"/>
<dbReference type="KEGG" id="ter:Tery_1018"/>
<dbReference type="eggNOG" id="COG0083">
    <property type="taxonomic scope" value="Bacteria"/>
</dbReference>
<dbReference type="HOGENOM" id="CLU_041243_0_2_3"/>
<dbReference type="OrthoDB" id="9769912at2"/>
<dbReference type="UniPathway" id="UPA00050">
    <property type="reaction ID" value="UER00064"/>
</dbReference>
<dbReference type="GO" id="GO:0005737">
    <property type="term" value="C:cytoplasm"/>
    <property type="evidence" value="ECO:0007669"/>
    <property type="project" value="UniProtKB-SubCell"/>
</dbReference>
<dbReference type="GO" id="GO:0005524">
    <property type="term" value="F:ATP binding"/>
    <property type="evidence" value="ECO:0007669"/>
    <property type="project" value="UniProtKB-UniRule"/>
</dbReference>
<dbReference type="GO" id="GO:0004413">
    <property type="term" value="F:homoserine kinase activity"/>
    <property type="evidence" value="ECO:0007669"/>
    <property type="project" value="UniProtKB-UniRule"/>
</dbReference>
<dbReference type="GO" id="GO:0009088">
    <property type="term" value="P:threonine biosynthetic process"/>
    <property type="evidence" value="ECO:0007669"/>
    <property type="project" value="UniProtKB-UniRule"/>
</dbReference>
<dbReference type="Gene3D" id="3.30.230.10">
    <property type="match status" value="1"/>
</dbReference>
<dbReference type="Gene3D" id="3.30.70.890">
    <property type="entry name" value="GHMP kinase, C-terminal domain"/>
    <property type="match status" value="1"/>
</dbReference>
<dbReference type="HAMAP" id="MF_00384">
    <property type="entry name" value="Homoser_kinase"/>
    <property type="match status" value="1"/>
</dbReference>
<dbReference type="InterPro" id="IPR013750">
    <property type="entry name" value="GHMP_kinase_C_dom"/>
</dbReference>
<dbReference type="InterPro" id="IPR036554">
    <property type="entry name" value="GHMP_kinase_C_sf"/>
</dbReference>
<dbReference type="InterPro" id="IPR006204">
    <property type="entry name" value="GHMP_kinase_N_dom"/>
</dbReference>
<dbReference type="InterPro" id="IPR006203">
    <property type="entry name" value="GHMP_knse_ATP-bd_CS"/>
</dbReference>
<dbReference type="InterPro" id="IPR000870">
    <property type="entry name" value="Homoserine_kinase"/>
</dbReference>
<dbReference type="InterPro" id="IPR020568">
    <property type="entry name" value="Ribosomal_Su5_D2-typ_SF"/>
</dbReference>
<dbReference type="InterPro" id="IPR014721">
    <property type="entry name" value="Ribsml_uS5_D2-typ_fold_subgr"/>
</dbReference>
<dbReference type="NCBIfam" id="NF002288">
    <property type="entry name" value="PRK01212.1-4"/>
    <property type="match status" value="1"/>
</dbReference>
<dbReference type="NCBIfam" id="TIGR00191">
    <property type="entry name" value="thrB"/>
    <property type="match status" value="1"/>
</dbReference>
<dbReference type="PANTHER" id="PTHR20861:SF1">
    <property type="entry name" value="HOMOSERINE KINASE"/>
    <property type="match status" value="1"/>
</dbReference>
<dbReference type="PANTHER" id="PTHR20861">
    <property type="entry name" value="HOMOSERINE/4-DIPHOSPHOCYTIDYL-2-C-METHYL-D-ERYTHRITOL KINASE"/>
    <property type="match status" value="1"/>
</dbReference>
<dbReference type="Pfam" id="PF08544">
    <property type="entry name" value="GHMP_kinases_C"/>
    <property type="match status" value="1"/>
</dbReference>
<dbReference type="Pfam" id="PF00288">
    <property type="entry name" value="GHMP_kinases_N"/>
    <property type="match status" value="1"/>
</dbReference>
<dbReference type="PIRSF" id="PIRSF000676">
    <property type="entry name" value="Homoser_kin"/>
    <property type="match status" value="1"/>
</dbReference>
<dbReference type="PRINTS" id="PR00958">
    <property type="entry name" value="HOMSERKINASE"/>
</dbReference>
<dbReference type="SUPFAM" id="SSF55060">
    <property type="entry name" value="GHMP Kinase, C-terminal domain"/>
    <property type="match status" value="1"/>
</dbReference>
<dbReference type="SUPFAM" id="SSF54211">
    <property type="entry name" value="Ribosomal protein S5 domain 2-like"/>
    <property type="match status" value="1"/>
</dbReference>
<dbReference type="PROSITE" id="PS00627">
    <property type="entry name" value="GHMP_KINASES_ATP"/>
    <property type="match status" value="1"/>
</dbReference>
<comment type="function">
    <text evidence="1">Catalyzes the ATP-dependent phosphorylation of L-homoserine to L-homoserine phosphate.</text>
</comment>
<comment type="catalytic activity">
    <reaction evidence="1">
        <text>L-homoserine + ATP = O-phospho-L-homoserine + ADP + H(+)</text>
        <dbReference type="Rhea" id="RHEA:13985"/>
        <dbReference type="ChEBI" id="CHEBI:15378"/>
        <dbReference type="ChEBI" id="CHEBI:30616"/>
        <dbReference type="ChEBI" id="CHEBI:57476"/>
        <dbReference type="ChEBI" id="CHEBI:57590"/>
        <dbReference type="ChEBI" id="CHEBI:456216"/>
        <dbReference type="EC" id="2.7.1.39"/>
    </reaction>
</comment>
<comment type="pathway">
    <text evidence="1">Amino-acid biosynthesis; L-threonine biosynthesis; L-threonine from L-aspartate: step 4/5.</text>
</comment>
<comment type="subcellular location">
    <subcellularLocation>
        <location evidence="1">Cytoplasm</location>
    </subcellularLocation>
</comment>
<comment type="similarity">
    <text evidence="1">Belongs to the GHMP kinase family. Homoserine kinase subfamily.</text>
</comment>
<feature type="chain" id="PRO_1000049193" description="Homoserine kinase">
    <location>
        <begin position="1"/>
        <end position="305"/>
    </location>
</feature>
<feature type="binding site" evidence="1">
    <location>
        <begin position="93"/>
        <end position="103"/>
    </location>
    <ligand>
        <name>ATP</name>
        <dbReference type="ChEBI" id="CHEBI:30616"/>
    </ligand>
</feature>
<name>KHSE_TRIEI</name>
<reference key="1">
    <citation type="journal article" date="2015" name="Proc. Natl. Acad. Sci. U.S.A.">
        <title>Trichodesmium genome maintains abundant, widespread noncoding DNA in situ, despite oligotrophic lifestyle.</title>
        <authorList>
            <person name="Walworth N."/>
            <person name="Pfreundt U."/>
            <person name="Nelson W.C."/>
            <person name="Mincer T."/>
            <person name="Heidelberg J.F."/>
            <person name="Fu F."/>
            <person name="Waterbury J.B."/>
            <person name="Glavina del Rio T."/>
            <person name="Goodwin L."/>
            <person name="Kyrpides N.C."/>
            <person name="Land M.L."/>
            <person name="Woyke T."/>
            <person name="Hutchins D.A."/>
            <person name="Hess W.R."/>
            <person name="Webb E.A."/>
        </authorList>
    </citation>
    <scope>NUCLEOTIDE SEQUENCE [LARGE SCALE GENOMIC DNA]</scope>
    <source>
        <strain>IMS101</strain>
    </source>
</reference>
<accession>Q117D0</accession>
<keyword id="KW-0028">Amino-acid biosynthesis</keyword>
<keyword id="KW-0067">ATP-binding</keyword>
<keyword id="KW-0963">Cytoplasm</keyword>
<keyword id="KW-0418">Kinase</keyword>
<keyword id="KW-0547">Nucleotide-binding</keyword>
<keyword id="KW-0791">Threonine biosynthesis</keyword>
<keyword id="KW-0808">Transferase</keyword>
<proteinExistence type="inferred from homology"/>